<proteinExistence type="inferred from homology"/>
<accession>Q8X735</accession>
<comment type="function">
    <text evidence="1">Catalyzes the 2-thiolation of uridine at the wobble position (U34) of tRNA(Lys), tRNA(Glu) and tRNA(Gln), leading to the formation of s(2)U34, the first step of tRNA-mnm(5)s(2)U34 synthesis. Sulfur is provided by IscS, via a sulfur-relay system. Binds ATP and its substrate tRNAs.</text>
</comment>
<comment type="catalytic activity">
    <reaction evidence="1">
        <text>S-sulfanyl-L-cysteinyl-[protein] + uridine(34) in tRNA + AH2 + ATP = 2-thiouridine(34) in tRNA + L-cysteinyl-[protein] + A + AMP + diphosphate + H(+)</text>
        <dbReference type="Rhea" id="RHEA:47032"/>
        <dbReference type="Rhea" id="RHEA-COMP:10131"/>
        <dbReference type="Rhea" id="RHEA-COMP:11726"/>
        <dbReference type="Rhea" id="RHEA-COMP:11727"/>
        <dbReference type="Rhea" id="RHEA-COMP:11728"/>
        <dbReference type="ChEBI" id="CHEBI:13193"/>
        <dbReference type="ChEBI" id="CHEBI:15378"/>
        <dbReference type="ChEBI" id="CHEBI:17499"/>
        <dbReference type="ChEBI" id="CHEBI:29950"/>
        <dbReference type="ChEBI" id="CHEBI:30616"/>
        <dbReference type="ChEBI" id="CHEBI:33019"/>
        <dbReference type="ChEBI" id="CHEBI:61963"/>
        <dbReference type="ChEBI" id="CHEBI:65315"/>
        <dbReference type="ChEBI" id="CHEBI:87170"/>
        <dbReference type="ChEBI" id="CHEBI:456215"/>
        <dbReference type="EC" id="2.8.1.13"/>
    </reaction>
</comment>
<comment type="subunit">
    <text evidence="1">Interacts with TusE.</text>
</comment>
<comment type="subcellular location">
    <subcellularLocation>
        <location evidence="1">Cytoplasm</location>
    </subcellularLocation>
</comment>
<comment type="similarity">
    <text evidence="1">Belongs to the MnmA/TRMU family.</text>
</comment>
<comment type="sequence caution" evidence="2">
    <conflict type="erroneous initiation">
        <sequence resource="EMBL-CDS" id="AAG55959"/>
    </conflict>
    <text>Extended N-terminus.</text>
</comment>
<reference key="1">
    <citation type="journal article" date="2001" name="Nature">
        <title>Genome sequence of enterohaemorrhagic Escherichia coli O157:H7.</title>
        <authorList>
            <person name="Perna N.T."/>
            <person name="Plunkett G. III"/>
            <person name="Burland V."/>
            <person name="Mau B."/>
            <person name="Glasner J.D."/>
            <person name="Rose D.J."/>
            <person name="Mayhew G.F."/>
            <person name="Evans P.S."/>
            <person name="Gregor J."/>
            <person name="Kirkpatrick H.A."/>
            <person name="Posfai G."/>
            <person name="Hackett J."/>
            <person name="Klink S."/>
            <person name="Boutin A."/>
            <person name="Shao Y."/>
            <person name="Miller L."/>
            <person name="Grotbeck E.J."/>
            <person name="Davis N.W."/>
            <person name="Lim A."/>
            <person name="Dimalanta E.T."/>
            <person name="Potamousis K."/>
            <person name="Apodaca J."/>
            <person name="Anantharaman T.S."/>
            <person name="Lin J."/>
            <person name="Yen G."/>
            <person name="Schwartz D.C."/>
            <person name="Welch R.A."/>
            <person name="Blattner F.R."/>
        </authorList>
    </citation>
    <scope>NUCLEOTIDE SEQUENCE [LARGE SCALE GENOMIC DNA]</scope>
    <source>
        <strain>O157:H7 / EDL933 / ATCC 700927 / EHEC</strain>
    </source>
</reference>
<reference key="2">
    <citation type="journal article" date="2001" name="DNA Res.">
        <title>Complete genome sequence of enterohemorrhagic Escherichia coli O157:H7 and genomic comparison with a laboratory strain K-12.</title>
        <authorList>
            <person name="Hayashi T."/>
            <person name="Makino K."/>
            <person name="Ohnishi M."/>
            <person name="Kurokawa K."/>
            <person name="Ishii K."/>
            <person name="Yokoyama K."/>
            <person name="Han C.-G."/>
            <person name="Ohtsubo E."/>
            <person name="Nakayama K."/>
            <person name="Murata T."/>
            <person name="Tanaka M."/>
            <person name="Tobe T."/>
            <person name="Iida T."/>
            <person name="Takami H."/>
            <person name="Honda T."/>
            <person name="Sasakawa C."/>
            <person name="Ogasawara N."/>
            <person name="Yasunaga T."/>
            <person name="Kuhara S."/>
            <person name="Shiba T."/>
            <person name="Hattori M."/>
            <person name="Shinagawa H."/>
        </authorList>
    </citation>
    <scope>NUCLEOTIDE SEQUENCE [LARGE SCALE GENOMIC DNA]</scope>
    <source>
        <strain>O157:H7 / Sakai / RIMD 0509952 / EHEC</strain>
    </source>
</reference>
<protein>
    <recommendedName>
        <fullName evidence="1">tRNA-specific 2-thiouridylase MnmA</fullName>
        <ecNumber evidence="1">2.8.1.13</ecNumber>
    </recommendedName>
</protein>
<organism>
    <name type="scientific">Escherichia coli O157:H7</name>
    <dbReference type="NCBI Taxonomy" id="83334"/>
    <lineage>
        <taxon>Bacteria</taxon>
        <taxon>Pseudomonadati</taxon>
        <taxon>Pseudomonadota</taxon>
        <taxon>Gammaproteobacteria</taxon>
        <taxon>Enterobacterales</taxon>
        <taxon>Enterobacteriaceae</taxon>
        <taxon>Escherichia</taxon>
    </lineage>
</organism>
<evidence type="ECO:0000255" key="1">
    <source>
        <dbReference type="HAMAP-Rule" id="MF_00144"/>
    </source>
</evidence>
<evidence type="ECO:0000305" key="2"/>
<name>MNMA_ECO57</name>
<keyword id="KW-0067">ATP-binding</keyword>
<keyword id="KW-0963">Cytoplasm</keyword>
<keyword id="KW-1015">Disulfide bond</keyword>
<keyword id="KW-0547">Nucleotide-binding</keyword>
<keyword id="KW-1185">Reference proteome</keyword>
<keyword id="KW-0694">RNA-binding</keyword>
<keyword id="KW-0808">Transferase</keyword>
<keyword id="KW-0819">tRNA processing</keyword>
<keyword id="KW-0820">tRNA-binding</keyword>
<dbReference type="EC" id="2.8.1.13" evidence="1"/>
<dbReference type="EMBL" id="AE005174">
    <property type="protein sequence ID" value="AAG55959.1"/>
    <property type="status" value="ALT_INIT"/>
    <property type="molecule type" value="Genomic_DNA"/>
</dbReference>
<dbReference type="EMBL" id="BA000007">
    <property type="protein sequence ID" value="BAB35028.2"/>
    <property type="molecule type" value="Genomic_DNA"/>
</dbReference>
<dbReference type="PIR" id="C85687">
    <property type="entry name" value="C85687"/>
</dbReference>
<dbReference type="PIR" id="E90829">
    <property type="entry name" value="E90829"/>
</dbReference>
<dbReference type="RefSeq" id="NP_309632.2">
    <property type="nucleotide sequence ID" value="NC_002695.1"/>
</dbReference>
<dbReference type="RefSeq" id="WP_001301861.1">
    <property type="nucleotide sequence ID" value="NZ_VOAI01000035.1"/>
</dbReference>
<dbReference type="SMR" id="Q8X735"/>
<dbReference type="STRING" id="155864.Z1862"/>
<dbReference type="DNASU" id="959790"/>
<dbReference type="GeneID" id="913286"/>
<dbReference type="KEGG" id="ece:Z1862"/>
<dbReference type="KEGG" id="ecs:ECs_1605"/>
<dbReference type="PATRIC" id="fig|386585.9.peg.1705"/>
<dbReference type="eggNOG" id="COG0482">
    <property type="taxonomic scope" value="Bacteria"/>
</dbReference>
<dbReference type="HOGENOM" id="CLU_035188_1_0_6"/>
<dbReference type="OMA" id="PFYVWDL"/>
<dbReference type="Proteomes" id="UP000000558">
    <property type="component" value="Chromosome"/>
</dbReference>
<dbReference type="Proteomes" id="UP000002519">
    <property type="component" value="Chromosome"/>
</dbReference>
<dbReference type="GO" id="GO:0005737">
    <property type="term" value="C:cytoplasm"/>
    <property type="evidence" value="ECO:0007669"/>
    <property type="project" value="UniProtKB-SubCell"/>
</dbReference>
<dbReference type="GO" id="GO:0005524">
    <property type="term" value="F:ATP binding"/>
    <property type="evidence" value="ECO:0007669"/>
    <property type="project" value="UniProtKB-KW"/>
</dbReference>
<dbReference type="GO" id="GO:0000049">
    <property type="term" value="F:tRNA binding"/>
    <property type="evidence" value="ECO:0007669"/>
    <property type="project" value="UniProtKB-KW"/>
</dbReference>
<dbReference type="GO" id="GO:0103016">
    <property type="term" value="F:tRNA-uridine 2-sulfurtransferase activity"/>
    <property type="evidence" value="ECO:0007669"/>
    <property type="project" value="UniProtKB-EC"/>
</dbReference>
<dbReference type="GO" id="GO:0002143">
    <property type="term" value="P:tRNA wobble position uridine thiolation"/>
    <property type="evidence" value="ECO:0007669"/>
    <property type="project" value="TreeGrafter"/>
</dbReference>
<dbReference type="CDD" id="cd01998">
    <property type="entry name" value="MnmA_TRMU-like"/>
    <property type="match status" value="1"/>
</dbReference>
<dbReference type="FunFam" id="2.30.30.280:FF:000001">
    <property type="entry name" value="tRNA-specific 2-thiouridylase MnmA"/>
    <property type="match status" value="1"/>
</dbReference>
<dbReference type="FunFam" id="2.40.30.10:FF:000023">
    <property type="entry name" value="tRNA-specific 2-thiouridylase MnmA"/>
    <property type="match status" value="1"/>
</dbReference>
<dbReference type="FunFam" id="3.40.50.620:FF:000004">
    <property type="entry name" value="tRNA-specific 2-thiouridylase MnmA"/>
    <property type="match status" value="1"/>
</dbReference>
<dbReference type="Gene3D" id="2.30.30.280">
    <property type="entry name" value="Adenine nucleotide alpha hydrolases-like domains"/>
    <property type="match status" value="1"/>
</dbReference>
<dbReference type="Gene3D" id="3.40.50.620">
    <property type="entry name" value="HUPs"/>
    <property type="match status" value="1"/>
</dbReference>
<dbReference type="Gene3D" id="2.40.30.10">
    <property type="entry name" value="Translation factors"/>
    <property type="match status" value="1"/>
</dbReference>
<dbReference type="HAMAP" id="MF_00144">
    <property type="entry name" value="tRNA_thiouridyl_MnmA"/>
    <property type="match status" value="1"/>
</dbReference>
<dbReference type="InterPro" id="IPR004506">
    <property type="entry name" value="MnmA-like"/>
</dbReference>
<dbReference type="InterPro" id="IPR046885">
    <property type="entry name" value="MnmA-like_C"/>
</dbReference>
<dbReference type="InterPro" id="IPR046884">
    <property type="entry name" value="MnmA-like_central"/>
</dbReference>
<dbReference type="InterPro" id="IPR023382">
    <property type="entry name" value="MnmA-like_central_sf"/>
</dbReference>
<dbReference type="InterPro" id="IPR014729">
    <property type="entry name" value="Rossmann-like_a/b/a_fold"/>
</dbReference>
<dbReference type="NCBIfam" id="NF001138">
    <property type="entry name" value="PRK00143.1"/>
    <property type="match status" value="1"/>
</dbReference>
<dbReference type="NCBIfam" id="TIGR00420">
    <property type="entry name" value="trmU"/>
    <property type="match status" value="1"/>
</dbReference>
<dbReference type="PANTHER" id="PTHR11933:SF5">
    <property type="entry name" value="MITOCHONDRIAL TRNA-SPECIFIC 2-THIOURIDYLASE 1"/>
    <property type="match status" value="1"/>
</dbReference>
<dbReference type="PANTHER" id="PTHR11933">
    <property type="entry name" value="TRNA 5-METHYLAMINOMETHYL-2-THIOURIDYLATE -METHYLTRANSFERASE"/>
    <property type="match status" value="1"/>
</dbReference>
<dbReference type="Pfam" id="PF03054">
    <property type="entry name" value="tRNA_Me_trans"/>
    <property type="match status" value="1"/>
</dbReference>
<dbReference type="Pfam" id="PF20258">
    <property type="entry name" value="tRNA_Me_trans_C"/>
    <property type="match status" value="1"/>
</dbReference>
<dbReference type="Pfam" id="PF20259">
    <property type="entry name" value="tRNA_Me_trans_M"/>
    <property type="match status" value="1"/>
</dbReference>
<dbReference type="SUPFAM" id="SSF52402">
    <property type="entry name" value="Adenine nucleotide alpha hydrolases-like"/>
    <property type="match status" value="1"/>
</dbReference>
<feature type="chain" id="PRO_0000121590" description="tRNA-specific 2-thiouridylase MnmA">
    <location>
        <begin position="1"/>
        <end position="368"/>
    </location>
</feature>
<feature type="region of interest" description="Interaction with target base in tRNA" evidence="1">
    <location>
        <begin position="97"/>
        <end position="99"/>
    </location>
</feature>
<feature type="region of interest" description="Interaction with tRNA" evidence="1">
    <location>
        <begin position="149"/>
        <end position="151"/>
    </location>
</feature>
<feature type="region of interest" description="Interaction with tRNA" evidence="1">
    <location>
        <begin position="311"/>
        <end position="312"/>
    </location>
</feature>
<feature type="active site" description="Nucleophile" evidence="1">
    <location>
        <position position="102"/>
    </location>
</feature>
<feature type="active site" description="Cysteine persulfide intermediate" evidence="1">
    <location>
        <position position="199"/>
    </location>
</feature>
<feature type="binding site" evidence="1">
    <location>
        <begin position="11"/>
        <end position="18"/>
    </location>
    <ligand>
        <name>ATP</name>
        <dbReference type="ChEBI" id="CHEBI:30616"/>
    </ligand>
</feature>
<feature type="binding site" evidence="1">
    <location>
        <position position="37"/>
    </location>
    <ligand>
        <name>ATP</name>
        <dbReference type="ChEBI" id="CHEBI:30616"/>
    </ligand>
</feature>
<feature type="binding site" evidence="1">
    <location>
        <position position="127"/>
    </location>
    <ligand>
        <name>ATP</name>
        <dbReference type="ChEBI" id="CHEBI:30616"/>
    </ligand>
</feature>
<feature type="site" description="Interaction with tRNA" evidence="1">
    <location>
        <position position="128"/>
    </location>
</feature>
<feature type="site" description="Interaction with tRNA" evidence="1">
    <location>
        <position position="344"/>
    </location>
</feature>
<feature type="disulfide bond" description="Alternate" evidence="1">
    <location>
        <begin position="102"/>
        <end position="199"/>
    </location>
</feature>
<sequence>MSETAKKVIVGMSGGVDSSVSAWLLQQQGYQVEGLFMKNWEEDDGEEYCTAAADLADAQAVCDKLGIELHTVNFAAEYWDNVFELFLAEYKAGRTPNPDILCNKEIKFKAFLEFAAEDLGADYIATGHYVRRADVDGKSRLLRGLDSNKDQSYFLYTLSHEQIAQSLFPVGELEKPQVRKIAEDLGLVTAKKKDSTGICFIGERKFREFLGRYLPAQPGKIITVDGDEIGEHQGLMYHTLGQRKGLGIGGTKEGTEEPWYVVDKDVENNILIVAQGHEHPRLMSVGLIAQQLHWVDREPFTGTMRCTVKTRYRQTDIPCTVKALDDDRIEVIFDEPVAAVTPGQSAVFYNGEVCLGGGIIEQRLPLPI</sequence>
<gene>
    <name evidence="1" type="primary">mnmA</name>
    <name type="synonym">trmU</name>
    <name type="ordered locus">Z1862</name>
    <name type="ordered locus">ECs1605</name>
</gene>